<accession>Q9X844</accession>
<accession>Q9X8N9</accession>
<name>PANC_STRCO</name>
<sequence length="337" mass="35456">MTTPTPPVLLRTAGELHARVRRGRRAVVMTMGALHEGHATLIRTARDIAGPDGEVVVTVFVNPLQFGAGEDLDRYPRTLDADLEIAGRAGADAVFAPAVDEVYPGGEPQVRVTAGPMGGRLEGASRPGHFDGMLTVVAKLLHLTRPDLALYGQKDAQQLALIRRMVRDLNFGVEIVGVPTVREEDGLALSSRNRYLSTAERRTALALSQALFAGLDRHAAQEALCARAREVPATQARAEALSALGESRAAADAHAVATSAPGSATAVRDAARLVLDDAARATPPLELDYLALVDPSDFTEIGDDHTGEAVLAVAARVGATRLIDNVHLTFGPLGAAS</sequence>
<feature type="chain" id="PRO_0000128278" description="Pantothenate synthetase">
    <location>
        <begin position="1"/>
        <end position="337"/>
    </location>
</feature>
<feature type="active site" description="Proton donor" evidence="1">
    <location>
        <position position="38"/>
    </location>
</feature>
<feature type="binding site" evidence="1">
    <location>
        <begin position="31"/>
        <end position="38"/>
    </location>
    <ligand>
        <name>ATP</name>
        <dbReference type="ChEBI" id="CHEBI:30616"/>
    </ligand>
</feature>
<feature type="binding site" evidence="1">
    <location>
        <position position="65"/>
    </location>
    <ligand>
        <name>(R)-pantoate</name>
        <dbReference type="ChEBI" id="CHEBI:15980"/>
    </ligand>
</feature>
<feature type="binding site" evidence="1">
    <location>
        <position position="65"/>
    </location>
    <ligand>
        <name>beta-alanine</name>
        <dbReference type="ChEBI" id="CHEBI:57966"/>
    </ligand>
</feature>
<feature type="binding site" evidence="1">
    <location>
        <begin position="152"/>
        <end position="155"/>
    </location>
    <ligand>
        <name>ATP</name>
        <dbReference type="ChEBI" id="CHEBI:30616"/>
    </ligand>
</feature>
<feature type="binding site" evidence="1">
    <location>
        <position position="158"/>
    </location>
    <ligand>
        <name>(R)-pantoate</name>
        <dbReference type="ChEBI" id="CHEBI:15980"/>
    </ligand>
</feature>
<feature type="binding site" evidence="1">
    <location>
        <position position="181"/>
    </location>
    <ligand>
        <name>ATP</name>
        <dbReference type="ChEBI" id="CHEBI:30616"/>
    </ligand>
</feature>
<feature type="binding site" evidence="1">
    <location>
        <begin position="189"/>
        <end position="192"/>
    </location>
    <ligand>
        <name>ATP</name>
        <dbReference type="ChEBI" id="CHEBI:30616"/>
    </ligand>
</feature>
<comment type="function">
    <text evidence="1">Catalyzes the condensation of pantoate with beta-alanine in an ATP-dependent reaction via a pantoyl-adenylate intermediate.</text>
</comment>
<comment type="catalytic activity">
    <reaction evidence="1">
        <text>(R)-pantoate + beta-alanine + ATP = (R)-pantothenate + AMP + diphosphate + H(+)</text>
        <dbReference type="Rhea" id="RHEA:10912"/>
        <dbReference type="ChEBI" id="CHEBI:15378"/>
        <dbReference type="ChEBI" id="CHEBI:15980"/>
        <dbReference type="ChEBI" id="CHEBI:29032"/>
        <dbReference type="ChEBI" id="CHEBI:30616"/>
        <dbReference type="ChEBI" id="CHEBI:33019"/>
        <dbReference type="ChEBI" id="CHEBI:57966"/>
        <dbReference type="ChEBI" id="CHEBI:456215"/>
        <dbReference type="EC" id="6.3.2.1"/>
    </reaction>
</comment>
<comment type="pathway">
    <text evidence="1">Cofactor biosynthesis; (R)-pantothenate biosynthesis; (R)-pantothenate from (R)-pantoate and beta-alanine: step 1/1.</text>
</comment>
<comment type="subunit">
    <text evidence="1">Homodimer.</text>
</comment>
<comment type="subcellular location">
    <subcellularLocation>
        <location evidence="1">Cytoplasm</location>
    </subcellularLocation>
</comment>
<comment type="miscellaneous">
    <text evidence="1">The reaction proceeds by a bi uni uni bi ping pong mechanism.</text>
</comment>
<comment type="similarity">
    <text evidence="1">Belongs to the pantothenate synthetase family.</text>
</comment>
<organism>
    <name type="scientific">Streptomyces coelicolor (strain ATCC BAA-471 / A3(2) / M145)</name>
    <dbReference type="NCBI Taxonomy" id="100226"/>
    <lineage>
        <taxon>Bacteria</taxon>
        <taxon>Bacillati</taxon>
        <taxon>Actinomycetota</taxon>
        <taxon>Actinomycetes</taxon>
        <taxon>Kitasatosporales</taxon>
        <taxon>Streptomycetaceae</taxon>
        <taxon>Streptomyces</taxon>
        <taxon>Streptomyces albidoflavus group</taxon>
    </lineage>
</organism>
<reference key="1">
    <citation type="journal article" date="2002" name="Nature">
        <title>Complete genome sequence of the model actinomycete Streptomyces coelicolor A3(2).</title>
        <authorList>
            <person name="Bentley S.D."/>
            <person name="Chater K.F."/>
            <person name="Cerdeno-Tarraga A.-M."/>
            <person name="Challis G.L."/>
            <person name="Thomson N.R."/>
            <person name="James K.D."/>
            <person name="Harris D.E."/>
            <person name="Quail M.A."/>
            <person name="Kieser H."/>
            <person name="Harper D."/>
            <person name="Bateman A."/>
            <person name="Brown S."/>
            <person name="Chandra G."/>
            <person name="Chen C.W."/>
            <person name="Collins M."/>
            <person name="Cronin A."/>
            <person name="Fraser A."/>
            <person name="Goble A."/>
            <person name="Hidalgo J."/>
            <person name="Hornsby T."/>
            <person name="Howarth S."/>
            <person name="Huang C.-H."/>
            <person name="Kieser T."/>
            <person name="Larke L."/>
            <person name="Murphy L.D."/>
            <person name="Oliver K."/>
            <person name="O'Neil S."/>
            <person name="Rabbinowitsch E."/>
            <person name="Rajandream M.A."/>
            <person name="Rutherford K.M."/>
            <person name="Rutter S."/>
            <person name="Seeger K."/>
            <person name="Saunders D."/>
            <person name="Sharp S."/>
            <person name="Squares R."/>
            <person name="Squares S."/>
            <person name="Taylor K."/>
            <person name="Warren T."/>
            <person name="Wietzorrek A."/>
            <person name="Woodward J.R."/>
            <person name="Barrell B.G."/>
            <person name="Parkhill J."/>
            <person name="Hopwood D.A."/>
        </authorList>
    </citation>
    <scope>NUCLEOTIDE SEQUENCE [LARGE SCALE GENOMIC DNA]</scope>
    <source>
        <strain>ATCC BAA-471 / A3(2) / M145</strain>
    </source>
</reference>
<proteinExistence type="inferred from homology"/>
<evidence type="ECO:0000255" key="1">
    <source>
        <dbReference type="HAMAP-Rule" id="MF_00158"/>
    </source>
</evidence>
<dbReference type="EC" id="6.3.2.1" evidence="1"/>
<dbReference type="EMBL" id="AL939116">
    <property type="protein sequence ID" value="CAD55315.1"/>
    <property type="molecule type" value="Genomic_DNA"/>
</dbReference>
<dbReference type="RefSeq" id="NP_733602.1">
    <property type="nucleotide sequence ID" value="NC_003888.3"/>
</dbReference>
<dbReference type="RefSeq" id="WP_003975450.1">
    <property type="nucleotide sequence ID" value="NZ_VNID01000023.1"/>
</dbReference>
<dbReference type="SMR" id="Q9X844"/>
<dbReference type="FunCoup" id="Q9X844">
    <property type="interactions" value="329"/>
</dbReference>
<dbReference type="STRING" id="100226.gene:17761005"/>
<dbReference type="PaxDb" id="100226-SCO3383"/>
<dbReference type="GeneID" id="91385574"/>
<dbReference type="KEGG" id="sco:SCO3383"/>
<dbReference type="PATRIC" id="fig|100226.15.peg.3446"/>
<dbReference type="eggNOG" id="COG0414">
    <property type="taxonomic scope" value="Bacteria"/>
</dbReference>
<dbReference type="HOGENOM" id="CLU_047148_0_2_11"/>
<dbReference type="InParanoid" id="Q9X844"/>
<dbReference type="OrthoDB" id="9773087at2"/>
<dbReference type="PhylomeDB" id="Q9X844"/>
<dbReference type="UniPathway" id="UPA00028">
    <property type="reaction ID" value="UER00005"/>
</dbReference>
<dbReference type="Proteomes" id="UP000001973">
    <property type="component" value="Chromosome"/>
</dbReference>
<dbReference type="GO" id="GO:0005829">
    <property type="term" value="C:cytosol"/>
    <property type="evidence" value="ECO:0000318"/>
    <property type="project" value="GO_Central"/>
</dbReference>
<dbReference type="GO" id="GO:0005524">
    <property type="term" value="F:ATP binding"/>
    <property type="evidence" value="ECO:0007669"/>
    <property type="project" value="UniProtKB-KW"/>
</dbReference>
<dbReference type="GO" id="GO:0004592">
    <property type="term" value="F:pantoate-beta-alanine ligase activity"/>
    <property type="evidence" value="ECO:0000318"/>
    <property type="project" value="GO_Central"/>
</dbReference>
<dbReference type="GO" id="GO:0015940">
    <property type="term" value="P:pantothenate biosynthetic process"/>
    <property type="evidence" value="ECO:0000318"/>
    <property type="project" value="GO_Central"/>
</dbReference>
<dbReference type="CDD" id="cd00560">
    <property type="entry name" value="PanC"/>
    <property type="match status" value="1"/>
</dbReference>
<dbReference type="FunFam" id="3.40.50.620:FF:000114">
    <property type="entry name" value="Pantothenate synthetase"/>
    <property type="match status" value="1"/>
</dbReference>
<dbReference type="Gene3D" id="3.40.50.620">
    <property type="entry name" value="HUPs"/>
    <property type="match status" value="1"/>
</dbReference>
<dbReference type="Gene3D" id="3.30.1300.10">
    <property type="entry name" value="Pantoate-beta-alanine ligase, C-terminal domain"/>
    <property type="match status" value="1"/>
</dbReference>
<dbReference type="HAMAP" id="MF_00158">
    <property type="entry name" value="PanC"/>
    <property type="match status" value="1"/>
</dbReference>
<dbReference type="InterPro" id="IPR003721">
    <property type="entry name" value="Pantoate_ligase"/>
</dbReference>
<dbReference type="InterPro" id="IPR042176">
    <property type="entry name" value="Pantoate_ligase_C"/>
</dbReference>
<dbReference type="InterPro" id="IPR014729">
    <property type="entry name" value="Rossmann-like_a/b/a_fold"/>
</dbReference>
<dbReference type="NCBIfam" id="TIGR00018">
    <property type="entry name" value="panC"/>
    <property type="match status" value="1"/>
</dbReference>
<dbReference type="PANTHER" id="PTHR21299">
    <property type="entry name" value="CYTIDYLATE KINASE/PANTOATE-BETA-ALANINE LIGASE"/>
    <property type="match status" value="1"/>
</dbReference>
<dbReference type="PANTHER" id="PTHR21299:SF1">
    <property type="entry name" value="PANTOATE--BETA-ALANINE LIGASE"/>
    <property type="match status" value="1"/>
</dbReference>
<dbReference type="Pfam" id="PF02569">
    <property type="entry name" value="Pantoate_ligase"/>
    <property type="match status" value="1"/>
</dbReference>
<dbReference type="SUPFAM" id="SSF52374">
    <property type="entry name" value="Nucleotidylyl transferase"/>
    <property type="match status" value="2"/>
</dbReference>
<gene>
    <name evidence="1" type="primary">panC</name>
    <name type="ordered locus">SCO3383</name>
    <name type="ORF">SCE126.01c</name>
    <name type="ORF">SCE94.34c</name>
</gene>
<keyword id="KW-0067">ATP-binding</keyword>
<keyword id="KW-0963">Cytoplasm</keyword>
<keyword id="KW-0436">Ligase</keyword>
<keyword id="KW-0547">Nucleotide-binding</keyword>
<keyword id="KW-0566">Pantothenate biosynthesis</keyword>
<keyword id="KW-1185">Reference proteome</keyword>
<protein>
    <recommendedName>
        <fullName evidence="1">Pantothenate synthetase</fullName>
        <shortName evidence="1">PS</shortName>
        <ecNumber evidence="1">6.3.2.1</ecNumber>
    </recommendedName>
    <alternativeName>
        <fullName evidence="1">Pantoate--beta-alanine ligase</fullName>
    </alternativeName>
    <alternativeName>
        <fullName evidence="1">Pantoate-activating enzyme</fullName>
    </alternativeName>
</protein>